<protein>
    <recommendedName>
        <fullName evidence="1">Endonuclease 8</fullName>
    </recommendedName>
    <alternativeName>
        <fullName evidence="1">DNA glycosylase/AP lyase Nei</fullName>
        <ecNumber evidence="1">3.2.2.-</ecNumber>
        <ecNumber evidence="1">4.2.99.18</ecNumber>
    </alternativeName>
    <alternativeName>
        <fullName evidence="1">DNA-(apurinic or apyrimidinic site) lyase Nei</fullName>
    </alternativeName>
    <alternativeName>
        <fullName evidence="1">Endonuclease VIII</fullName>
    </alternativeName>
</protein>
<sequence length="263" mass="29799">MPEGPEIRRAADNLEAAIKGKPLTDVWFAFPQLKSYQSRLIGQHVTHVETRGKALLTHFSNDLTLYSHNQLYGVWRVVDTGEEPQTTRVLRVKLQTADKTILLYSASDIEMLTPEQLTTHPFLQRVGPDVLDPNLTPEVVKERLLSPRFRNRQFAGLLLDQAFLAGLGNYLRVEILWQVGLTGNHKAKDLNAAQLDALAHALLDTPRLSYATRGQVDENKYHGALFRFKVFHRDGEPCERCGGIIEKTTLSSRPFYWCPGCQH</sequence>
<keyword id="KW-0227">DNA damage</keyword>
<keyword id="KW-0234">DNA repair</keyword>
<keyword id="KW-0238">DNA-binding</keyword>
<keyword id="KW-0326">Glycosidase</keyword>
<keyword id="KW-0378">Hydrolase</keyword>
<keyword id="KW-0456">Lyase</keyword>
<keyword id="KW-0479">Metal-binding</keyword>
<keyword id="KW-0511">Multifunctional enzyme</keyword>
<keyword id="KW-0862">Zinc</keyword>
<keyword id="KW-0863">Zinc-finger</keyword>
<comment type="function">
    <text evidence="1">Involved in base excision repair of DNA damaged by oxidation or by mutagenic agents. Acts as a DNA glycosylase that recognizes and removes damaged bases. Has a preference for oxidized pyrimidines, such as thymine glycol, 5,6-dihydrouracil and 5,6-dihydrothymine. Has AP (apurinic/apyrimidinic) lyase activity and introduces nicks in the DNA strand. Cleaves the DNA backbone by beta-delta elimination to generate a single-strand break at the site of the removed base with both 3'- and 5'-phosphates.</text>
</comment>
<comment type="catalytic activity">
    <reaction evidence="1">
        <text>2'-deoxyribonucleotide-(2'-deoxyribose 5'-phosphate)-2'-deoxyribonucleotide-DNA = a 3'-end 2'-deoxyribonucleotide-(2,3-dehydro-2,3-deoxyribose 5'-phosphate)-DNA + a 5'-end 5'-phospho-2'-deoxyribonucleoside-DNA + H(+)</text>
        <dbReference type="Rhea" id="RHEA:66592"/>
        <dbReference type="Rhea" id="RHEA-COMP:13180"/>
        <dbReference type="Rhea" id="RHEA-COMP:16897"/>
        <dbReference type="Rhea" id="RHEA-COMP:17067"/>
        <dbReference type="ChEBI" id="CHEBI:15378"/>
        <dbReference type="ChEBI" id="CHEBI:136412"/>
        <dbReference type="ChEBI" id="CHEBI:157695"/>
        <dbReference type="ChEBI" id="CHEBI:167181"/>
        <dbReference type="EC" id="4.2.99.18"/>
    </reaction>
</comment>
<comment type="cofactor">
    <cofactor evidence="1">
        <name>Zn(2+)</name>
        <dbReference type="ChEBI" id="CHEBI:29105"/>
    </cofactor>
    <text evidence="1">Binds 1 zinc ion per subunit.</text>
</comment>
<comment type="similarity">
    <text evidence="1">Belongs to the FPG family.</text>
</comment>
<feature type="initiator methionine" description="Removed" evidence="1">
    <location>
        <position position="1"/>
    </location>
</feature>
<feature type="chain" id="PRO_1000165091" description="Endonuclease 8">
    <location>
        <begin position="2"/>
        <end position="263"/>
    </location>
</feature>
<feature type="zinc finger region" description="FPG-type" evidence="1">
    <location>
        <begin position="229"/>
        <end position="263"/>
    </location>
</feature>
<feature type="active site" description="Schiff-base intermediate with DNA" evidence="1">
    <location>
        <position position="2"/>
    </location>
</feature>
<feature type="active site" description="Proton donor" evidence="1">
    <location>
        <position position="3"/>
    </location>
</feature>
<feature type="active site" description="Proton donor; for beta-elimination activity" evidence="1">
    <location>
        <position position="53"/>
    </location>
</feature>
<feature type="active site" description="Proton donor; for delta-elimination activity" evidence="1">
    <location>
        <position position="253"/>
    </location>
</feature>
<feature type="binding site" evidence="1">
    <location>
        <position position="70"/>
    </location>
    <ligand>
        <name>DNA</name>
        <dbReference type="ChEBI" id="CHEBI:16991"/>
    </ligand>
</feature>
<feature type="binding site" evidence="1">
    <location>
        <position position="125"/>
    </location>
    <ligand>
        <name>DNA</name>
        <dbReference type="ChEBI" id="CHEBI:16991"/>
    </ligand>
</feature>
<feature type="binding site" evidence="1">
    <location>
        <position position="169"/>
    </location>
    <ligand>
        <name>DNA</name>
        <dbReference type="ChEBI" id="CHEBI:16991"/>
    </ligand>
</feature>
<gene>
    <name evidence="1" type="primary">nei</name>
    <name type="ordered locus">ECED1_0686</name>
</gene>
<name>END8_ECO81</name>
<proteinExistence type="inferred from homology"/>
<accession>B7MPL0</accession>
<dbReference type="EC" id="3.2.2.-" evidence="1"/>
<dbReference type="EC" id="4.2.99.18" evidence="1"/>
<dbReference type="EMBL" id="CU928162">
    <property type="protein sequence ID" value="CAR06892.1"/>
    <property type="molecule type" value="Genomic_DNA"/>
</dbReference>
<dbReference type="RefSeq" id="WP_001114008.1">
    <property type="nucleotide sequence ID" value="NC_011745.1"/>
</dbReference>
<dbReference type="SMR" id="B7MPL0"/>
<dbReference type="KEGG" id="ecq:ECED1_0686"/>
<dbReference type="HOGENOM" id="CLU_038423_2_2_6"/>
<dbReference type="Proteomes" id="UP000000748">
    <property type="component" value="Chromosome"/>
</dbReference>
<dbReference type="GO" id="GO:0140078">
    <property type="term" value="F:class I DNA-(apurinic or apyrimidinic site) endonuclease activity"/>
    <property type="evidence" value="ECO:0007669"/>
    <property type="project" value="UniProtKB-EC"/>
</dbReference>
<dbReference type="GO" id="GO:0003684">
    <property type="term" value="F:damaged DNA binding"/>
    <property type="evidence" value="ECO:0007669"/>
    <property type="project" value="InterPro"/>
</dbReference>
<dbReference type="GO" id="GO:0000703">
    <property type="term" value="F:oxidized pyrimidine nucleobase lesion DNA N-glycosylase activity"/>
    <property type="evidence" value="ECO:0007669"/>
    <property type="project" value="UniProtKB-UniRule"/>
</dbReference>
<dbReference type="GO" id="GO:0008270">
    <property type="term" value="F:zinc ion binding"/>
    <property type="evidence" value="ECO:0007669"/>
    <property type="project" value="UniProtKB-UniRule"/>
</dbReference>
<dbReference type="GO" id="GO:0006284">
    <property type="term" value="P:base-excision repair"/>
    <property type="evidence" value="ECO:0007669"/>
    <property type="project" value="InterPro"/>
</dbReference>
<dbReference type="CDD" id="cd08965">
    <property type="entry name" value="EcNei-like_N"/>
    <property type="match status" value="1"/>
</dbReference>
<dbReference type="FunFam" id="1.10.8.50:FF:000005">
    <property type="entry name" value="Endonuclease 8"/>
    <property type="match status" value="1"/>
</dbReference>
<dbReference type="FunFam" id="3.20.190.10:FF:000002">
    <property type="entry name" value="Endonuclease 8"/>
    <property type="match status" value="1"/>
</dbReference>
<dbReference type="Gene3D" id="1.10.8.50">
    <property type="match status" value="1"/>
</dbReference>
<dbReference type="Gene3D" id="3.20.190.10">
    <property type="entry name" value="MutM-like, N-terminal"/>
    <property type="match status" value="1"/>
</dbReference>
<dbReference type="HAMAP" id="MF_01253">
    <property type="entry name" value="Endonuclease_8"/>
    <property type="match status" value="1"/>
</dbReference>
<dbReference type="InterPro" id="IPR015886">
    <property type="entry name" value="DNA_glyclase/AP_lyase_DNA-bd"/>
</dbReference>
<dbReference type="InterPro" id="IPR015887">
    <property type="entry name" value="DNA_glyclase_Znf_dom_DNA_BS"/>
</dbReference>
<dbReference type="InterPro" id="IPR044091">
    <property type="entry name" value="EcNei-like_N"/>
</dbReference>
<dbReference type="InterPro" id="IPR023713">
    <property type="entry name" value="Endonuclease-VIII"/>
</dbReference>
<dbReference type="InterPro" id="IPR012319">
    <property type="entry name" value="FPG_cat"/>
</dbReference>
<dbReference type="InterPro" id="IPR035937">
    <property type="entry name" value="MutM-like_N-ter"/>
</dbReference>
<dbReference type="InterPro" id="IPR010979">
    <property type="entry name" value="Ribosomal_uS13-like_H2TH"/>
</dbReference>
<dbReference type="InterPro" id="IPR000214">
    <property type="entry name" value="Znf_DNA_glyclase/AP_lyase"/>
</dbReference>
<dbReference type="InterPro" id="IPR010663">
    <property type="entry name" value="Znf_FPG/IleRS"/>
</dbReference>
<dbReference type="NCBIfam" id="NF007763">
    <property type="entry name" value="PRK10445.1"/>
    <property type="match status" value="1"/>
</dbReference>
<dbReference type="PANTHER" id="PTHR42697">
    <property type="entry name" value="ENDONUCLEASE 8"/>
    <property type="match status" value="1"/>
</dbReference>
<dbReference type="PANTHER" id="PTHR42697:SF1">
    <property type="entry name" value="ENDONUCLEASE 8"/>
    <property type="match status" value="1"/>
</dbReference>
<dbReference type="Pfam" id="PF01149">
    <property type="entry name" value="Fapy_DNA_glyco"/>
    <property type="match status" value="1"/>
</dbReference>
<dbReference type="Pfam" id="PF06831">
    <property type="entry name" value="H2TH"/>
    <property type="match status" value="1"/>
</dbReference>
<dbReference type="Pfam" id="PF06827">
    <property type="entry name" value="zf-FPG_IleRS"/>
    <property type="match status" value="1"/>
</dbReference>
<dbReference type="SMART" id="SM00898">
    <property type="entry name" value="Fapy_DNA_glyco"/>
    <property type="match status" value="1"/>
</dbReference>
<dbReference type="SMART" id="SM01232">
    <property type="entry name" value="H2TH"/>
    <property type="match status" value="1"/>
</dbReference>
<dbReference type="SUPFAM" id="SSF57716">
    <property type="entry name" value="Glucocorticoid receptor-like (DNA-binding domain)"/>
    <property type="match status" value="1"/>
</dbReference>
<dbReference type="SUPFAM" id="SSF81624">
    <property type="entry name" value="N-terminal domain of MutM-like DNA repair proteins"/>
    <property type="match status" value="1"/>
</dbReference>
<dbReference type="SUPFAM" id="SSF46946">
    <property type="entry name" value="S13-like H2TH domain"/>
    <property type="match status" value="1"/>
</dbReference>
<dbReference type="PROSITE" id="PS51068">
    <property type="entry name" value="FPG_CAT"/>
    <property type="match status" value="1"/>
</dbReference>
<dbReference type="PROSITE" id="PS01242">
    <property type="entry name" value="ZF_FPG_1"/>
    <property type="match status" value="1"/>
</dbReference>
<dbReference type="PROSITE" id="PS51066">
    <property type="entry name" value="ZF_FPG_2"/>
    <property type="match status" value="1"/>
</dbReference>
<evidence type="ECO:0000255" key="1">
    <source>
        <dbReference type="HAMAP-Rule" id="MF_01253"/>
    </source>
</evidence>
<organism>
    <name type="scientific">Escherichia coli O81 (strain ED1a)</name>
    <dbReference type="NCBI Taxonomy" id="585397"/>
    <lineage>
        <taxon>Bacteria</taxon>
        <taxon>Pseudomonadati</taxon>
        <taxon>Pseudomonadota</taxon>
        <taxon>Gammaproteobacteria</taxon>
        <taxon>Enterobacterales</taxon>
        <taxon>Enterobacteriaceae</taxon>
        <taxon>Escherichia</taxon>
    </lineage>
</organism>
<reference key="1">
    <citation type="journal article" date="2009" name="PLoS Genet.">
        <title>Organised genome dynamics in the Escherichia coli species results in highly diverse adaptive paths.</title>
        <authorList>
            <person name="Touchon M."/>
            <person name="Hoede C."/>
            <person name="Tenaillon O."/>
            <person name="Barbe V."/>
            <person name="Baeriswyl S."/>
            <person name="Bidet P."/>
            <person name="Bingen E."/>
            <person name="Bonacorsi S."/>
            <person name="Bouchier C."/>
            <person name="Bouvet O."/>
            <person name="Calteau A."/>
            <person name="Chiapello H."/>
            <person name="Clermont O."/>
            <person name="Cruveiller S."/>
            <person name="Danchin A."/>
            <person name="Diard M."/>
            <person name="Dossat C."/>
            <person name="Karoui M.E."/>
            <person name="Frapy E."/>
            <person name="Garry L."/>
            <person name="Ghigo J.M."/>
            <person name="Gilles A.M."/>
            <person name="Johnson J."/>
            <person name="Le Bouguenec C."/>
            <person name="Lescat M."/>
            <person name="Mangenot S."/>
            <person name="Martinez-Jehanne V."/>
            <person name="Matic I."/>
            <person name="Nassif X."/>
            <person name="Oztas S."/>
            <person name="Petit M.A."/>
            <person name="Pichon C."/>
            <person name="Rouy Z."/>
            <person name="Ruf C.S."/>
            <person name="Schneider D."/>
            <person name="Tourret J."/>
            <person name="Vacherie B."/>
            <person name="Vallenet D."/>
            <person name="Medigue C."/>
            <person name="Rocha E.P.C."/>
            <person name="Denamur E."/>
        </authorList>
    </citation>
    <scope>NUCLEOTIDE SEQUENCE [LARGE SCALE GENOMIC DNA]</scope>
    <source>
        <strain>ED1a</strain>
    </source>
</reference>